<reference key="1">
    <citation type="submission" date="1994-08" db="PIR data bank">
        <authorList>
            <person name="Chicz R.M."/>
        </authorList>
    </citation>
    <scope>PROTEIN SEQUENCE OF 2-132</scope>
    <scope>ACETYLATION AT ALA-2</scope>
</reference>
<organism>
    <name type="scientific">Fasciola hepatica</name>
    <name type="common">Liver fluke</name>
    <dbReference type="NCBI Taxonomy" id="6192"/>
    <lineage>
        <taxon>Eukaryota</taxon>
        <taxon>Metazoa</taxon>
        <taxon>Spiralia</taxon>
        <taxon>Lophotrochozoa</taxon>
        <taxon>Platyhelminthes</taxon>
        <taxon>Trematoda</taxon>
        <taxon>Digenea</taxon>
        <taxon>Plagiorchiida</taxon>
        <taxon>Echinostomata</taxon>
        <taxon>Echinostomatoidea</taxon>
        <taxon>Fasciolidae</taxon>
        <taxon>Fasciola</taxon>
    </lineage>
</organism>
<dbReference type="PIR" id="A44638">
    <property type="entry name" value="A44638"/>
</dbReference>
<dbReference type="SMR" id="Q7M4G1"/>
<dbReference type="GO" id="GO:0008289">
    <property type="term" value="F:lipid binding"/>
    <property type="evidence" value="ECO:0007669"/>
    <property type="project" value="UniProtKB-KW"/>
</dbReference>
<dbReference type="CDD" id="cd00742">
    <property type="entry name" value="FABP"/>
    <property type="match status" value="1"/>
</dbReference>
<dbReference type="Gene3D" id="2.40.128.20">
    <property type="match status" value="1"/>
</dbReference>
<dbReference type="InterPro" id="IPR012674">
    <property type="entry name" value="Calycin"/>
</dbReference>
<dbReference type="InterPro" id="IPR000463">
    <property type="entry name" value="Fatty_acid-bd"/>
</dbReference>
<dbReference type="InterPro" id="IPR031259">
    <property type="entry name" value="ILBP"/>
</dbReference>
<dbReference type="PANTHER" id="PTHR11955">
    <property type="entry name" value="FATTY ACID BINDING PROTEIN"/>
    <property type="match status" value="1"/>
</dbReference>
<dbReference type="Pfam" id="PF14651">
    <property type="entry name" value="Lipocalin_7"/>
    <property type="match status" value="1"/>
</dbReference>
<dbReference type="PRINTS" id="PR00178">
    <property type="entry name" value="FATTYACIDBP"/>
</dbReference>
<dbReference type="SUPFAM" id="SSF50814">
    <property type="entry name" value="Lipocalins"/>
    <property type="match status" value="1"/>
</dbReference>
<accession>Q7M4G1</accession>
<feature type="initiator methionine" description="Removed" evidence="1">
    <location>
        <position position="1"/>
    </location>
</feature>
<feature type="chain" id="PRO_0000067355" description="Fatty acid-binding protein type 2">
    <location>
        <begin position="2"/>
        <end position="132"/>
    </location>
</feature>
<feature type="modified residue" description="N-acetylalanine" evidence="1">
    <location>
        <position position="2"/>
    </location>
</feature>
<proteinExistence type="evidence at protein level"/>
<keyword id="KW-0007">Acetylation</keyword>
<keyword id="KW-0903">Direct protein sequencing</keyword>
<keyword id="KW-0446">Lipid-binding</keyword>
<keyword id="KW-0813">Transport</keyword>
<comment type="similarity">
    <text evidence="2">Belongs to the calycin superfamily. Fatty-acid binding protein (FABP) family.</text>
</comment>
<name>FABP2_FASHE</name>
<sequence length="132" mass="14936">MADFVGSWKLEHSENMDGVWKALGVPSDMVDKARNEKPEFTFELEGNKMTIKMVSSLKTKTTTFTFGEEFKDETFDNRTVMSTVTKDSENKITQVQKGPEHTTHIVREVTGDKMVITITVGDVKAVNTLRKM</sequence>
<evidence type="ECO:0000269" key="1">
    <source ref="1"/>
</evidence>
<evidence type="ECO:0000305" key="2"/>
<protein>
    <recommendedName>
        <fullName>Fatty acid-binding protein type 2</fullName>
    </recommendedName>
</protein>